<proteinExistence type="inferred from homology"/>
<name>SYE_PSEAB</name>
<organism>
    <name type="scientific">Pseudomonas aeruginosa (strain UCBPP-PA14)</name>
    <dbReference type="NCBI Taxonomy" id="208963"/>
    <lineage>
        <taxon>Bacteria</taxon>
        <taxon>Pseudomonadati</taxon>
        <taxon>Pseudomonadota</taxon>
        <taxon>Gammaproteobacteria</taxon>
        <taxon>Pseudomonadales</taxon>
        <taxon>Pseudomonadaceae</taxon>
        <taxon>Pseudomonas</taxon>
    </lineage>
</organism>
<comment type="function">
    <text evidence="1">Catalyzes the attachment of glutamate to tRNA(Glu) in a two-step reaction: glutamate is first activated by ATP to form Glu-AMP and then transferred to the acceptor end of tRNA(Glu).</text>
</comment>
<comment type="catalytic activity">
    <reaction evidence="1">
        <text>tRNA(Glu) + L-glutamate + ATP = L-glutamyl-tRNA(Glu) + AMP + diphosphate</text>
        <dbReference type="Rhea" id="RHEA:23540"/>
        <dbReference type="Rhea" id="RHEA-COMP:9663"/>
        <dbReference type="Rhea" id="RHEA-COMP:9680"/>
        <dbReference type="ChEBI" id="CHEBI:29985"/>
        <dbReference type="ChEBI" id="CHEBI:30616"/>
        <dbReference type="ChEBI" id="CHEBI:33019"/>
        <dbReference type="ChEBI" id="CHEBI:78442"/>
        <dbReference type="ChEBI" id="CHEBI:78520"/>
        <dbReference type="ChEBI" id="CHEBI:456215"/>
        <dbReference type="EC" id="6.1.1.17"/>
    </reaction>
</comment>
<comment type="cofactor">
    <cofactor evidence="1">
        <name>Zn(2+)</name>
        <dbReference type="ChEBI" id="CHEBI:29105"/>
    </cofactor>
    <text evidence="1">Binds 1 zinc ion per subunit.</text>
</comment>
<comment type="subunit">
    <text evidence="1">Monomer.</text>
</comment>
<comment type="subcellular location">
    <subcellularLocation>
        <location evidence="1">Cytoplasm</location>
    </subcellularLocation>
</comment>
<comment type="similarity">
    <text evidence="1">Belongs to the class-I aminoacyl-tRNA synthetase family. Glutamate--tRNA ligase type 1 subfamily.</text>
</comment>
<feature type="chain" id="PRO_1000001938" description="Glutamate--tRNA ligase">
    <location>
        <begin position="1"/>
        <end position="494"/>
    </location>
</feature>
<feature type="short sequence motif" description="'HIGH' region" evidence="1">
    <location>
        <begin position="10"/>
        <end position="20"/>
    </location>
</feature>
<feature type="short sequence motif" description="'KMSKS' region" evidence="1">
    <location>
        <begin position="251"/>
        <end position="255"/>
    </location>
</feature>
<feature type="binding site" evidence="1">
    <location>
        <position position="107"/>
    </location>
    <ligand>
        <name>Zn(2+)</name>
        <dbReference type="ChEBI" id="CHEBI:29105"/>
    </ligand>
</feature>
<feature type="binding site" evidence="1">
    <location>
        <position position="109"/>
    </location>
    <ligand>
        <name>Zn(2+)</name>
        <dbReference type="ChEBI" id="CHEBI:29105"/>
    </ligand>
</feature>
<feature type="binding site" evidence="1">
    <location>
        <position position="134"/>
    </location>
    <ligand>
        <name>Zn(2+)</name>
        <dbReference type="ChEBI" id="CHEBI:29105"/>
    </ligand>
</feature>
<feature type="binding site" evidence="1">
    <location>
        <position position="136"/>
    </location>
    <ligand>
        <name>Zn(2+)</name>
        <dbReference type="ChEBI" id="CHEBI:29105"/>
    </ligand>
</feature>
<feature type="binding site" evidence="1">
    <location>
        <position position="254"/>
    </location>
    <ligand>
        <name>ATP</name>
        <dbReference type="ChEBI" id="CHEBI:30616"/>
    </ligand>
</feature>
<gene>
    <name evidence="1" type="primary">gltX</name>
    <name type="ordered locus">PA14_23560</name>
</gene>
<keyword id="KW-0030">Aminoacyl-tRNA synthetase</keyword>
<keyword id="KW-0067">ATP-binding</keyword>
<keyword id="KW-0963">Cytoplasm</keyword>
<keyword id="KW-0436">Ligase</keyword>
<keyword id="KW-0479">Metal-binding</keyword>
<keyword id="KW-0547">Nucleotide-binding</keyword>
<keyword id="KW-0648">Protein biosynthesis</keyword>
<keyword id="KW-0862">Zinc</keyword>
<sequence length="494" mass="56777">MTTVRTRIAPSPTGDPHVGTAYIALFNLCFARQHGGQFILRIEDTDQLRSTRESEQQIYDALRWLGIEWDEGPDVGGPHGPYRQSERGHIYKRYSDELVEKGHAFTCFCTPERLDAVRAEQMARKETPRYDGHCMHLPKDEVQRRLAAGESHVTRMKVPTEGVCVVPDMLRGDVEIPWDRMDMQVLMKADGLPTYFLANVVDDHLMGITHVLRGEEWLPSAPKLIKLYEYFGWEQPQLCYMPLLRNPDKSKLSKRKNPTSITFYERMGYLPQALLNYLGRMGWSMPDEREKFTLAEMIEHFDLSRVSLGGPIFDLEKLSWLNGQWIREQSVEEFAREVQKWALNPEYLMKIAPHVQGRVENFSQIAPLAGFFFSGGVPLDASLFEHKKLDPTQVRQVLQLVLWKLESLRQWEKERITGCIQAVAEHLQLKLRDVMPLMFPAITGHASSVSVLDAMEILGADLSRYRLRQALELLGGASKKETKEWEKIRDAIPG</sequence>
<reference key="1">
    <citation type="journal article" date="2006" name="Genome Biol.">
        <title>Genomic analysis reveals that Pseudomonas aeruginosa virulence is combinatorial.</title>
        <authorList>
            <person name="Lee D.G."/>
            <person name="Urbach J.M."/>
            <person name="Wu G."/>
            <person name="Liberati N.T."/>
            <person name="Feinbaum R.L."/>
            <person name="Miyata S."/>
            <person name="Diggins L.T."/>
            <person name="He J."/>
            <person name="Saucier M."/>
            <person name="Deziel E."/>
            <person name="Friedman L."/>
            <person name="Li L."/>
            <person name="Grills G."/>
            <person name="Montgomery K."/>
            <person name="Kucherlapati R."/>
            <person name="Rahme L.G."/>
            <person name="Ausubel F.M."/>
        </authorList>
    </citation>
    <scope>NUCLEOTIDE SEQUENCE [LARGE SCALE GENOMIC DNA]</scope>
    <source>
        <strain>UCBPP-PA14</strain>
    </source>
</reference>
<dbReference type="EC" id="6.1.1.17" evidence="1"/>
<dbReference type="EMBL" id="CP000438">
    <property type="protein sequence ID" value="ABJ12366.1"/>
    <property type="molecule type" value="Genomic_DNA"/>
</dbReference>
<dbReference type="RefSeq" id="WP_003130541.1">
    <property type="nucleotide sequence ID" value="NZ_CP034244.1"/>
</dbReference>
<dbReference type="SMR" id="Q02PU7"/>
<dbReference type="KEGG" id="pau:PA14_23560"/>
<dbReference type="PseudoCAP" id="PA14_23560"/>
<dbReference type="HOGENOM" id="CLU_015768_6_3_6"/>
<dbReference type="BioCyc" id="PAER208963:G1G74-1964-MONOMER"/>
<dbReference type="Proteomes" id="UP000000653">
    <property type="component" value="Chromosome"/>
</dbReference>
<dbReference type="GO" id="GO:0005829">
    <property type="term" value="C:cytosol"/>
    <property type="evidence" value="ECO:0007669"/>
    <property type="project" value="TreeGrafter"/>
</dbReference>
<dbReference type="GO" id="GO:0005524">
    <property type="term" value="F:ATP binding"/>
    <property type="evidence" value="ECO:0007669"/>
    <property type="project" value="UniProtKB-UniRule"/>
</dbReference>
<dbReference type="GO" id="GO:0004818">
    <property type="term" value="F:glutamate-tRNA ligase activity"/>
    <property type="evidence" value="ECO:0007669"/>
    <property type="project" value="UniProtKB-UniRule"/>
</dbReference>
<dbReference type="GO" id="GO:0000049">
    <property type="term" value="F:tRNA binding"/>
    <property type="evidence" value="ECO:0007669"/>
    <property type="project" value="InterPro"/>
</dbReference>
<dbReference type="GO" id="GO:0008270">
    <property type="term" value="F:zinc ion binding"/>
    <property type="evidence" value="ECO:0007669"/>
    <property type="project" value="UniProtKB-UniRule"/>
</dbReference>
<dbReference type="GO" id="GO:0006424">
    <property type="term" value="P:glutamyl-tRNA aminoacylation"/>
    <property type="evidence" value="ECO:0007669"/>
    <property type="project" value="UniProtKB-UniRule"/>
</dbReference>
<dbReference type="CDD" id="cd00808">
    <property type="entry name" value="GluRS_core"/>
    <property type="match status" value="1"/>
</dbReference>
<dbReference type="FunFam" id="1.10.10.350:FF:000007">
    <property type="entry name" value="Glutamate--tRNA ligase"/>
    <property type="match status" value="1"/>
</dbReference>
<dbReference type="FunFam" id="3.40.50.620:FF:000045">
    <property type="entry name" value="Glutamate--tRNA ligase, mitochondrial"/>
    <property type="match status" value="1"/>
</dbReference>
<dbReference type="Gene3D" id="1.10.10.350">
    <property type="match status" value="1"/>
</dbReference>
<dbReference type="Gene3D" id="3.40.50.620">
    <property type="entry name" value="HUPs"/>
    <property type="match status" value="1"/>
</dbReference>
<dbReference type="HAMAP" id="MF_00022">
    <property type="entry name" value="Glu_tRNA_synth_type1"/>
    <property type="match status" value="1"/>
</dbReference>
<dbReference type="InterPro" id="IPR045462">
    <property type="entry name" value="aa-tRNA-synth_I_cd-bd"/>
</dbReference>
<dbReference type="InterPro" id="IPR020751">
    <property type="entry name" value="aa-tRNA-synth_I_codon-bd_sub2"/>
</dbReference>
<dbReference type="InterPro" id="IPR001412">
    <property type="entry name" value="aa-tRNA-synth_I_CS"/>
</dbReference>
<dbReference type="InterPro" id="IPR008925">
    <property type="entry name" value="aa_tRNA-synth_I_cd-bd_sf"/>
</dbReference>
<dbReference type="InterPro" id="IPR004527">
    <property type="entry name" value="Glu-tRNA-ligase_bac/mito"/>
</dbReference>
<dbReference type="InterPro" id="IPR000924">
    <property type="entry name" value="Glu/Gln-tRNA-synth"/>
</dbReference>
<dbReference type="InterPro" id="IPR020058">
    <property type="entry name" value="Glu/Gln-tRNA-synth_Ib_cat-dom"/>
</dbReference>
<dbReference type="InterPro" id="IPR049940">
    <property type="entry name" value="GluQ/Sye"/>
</dbReference>
<dbReference type="InterPro" id="IPR033910">
    <property type="entry name" value="GluRS_core"/>
</dbReference>
<dbReference type="InterPro" id="IPR014729">
    <property type="entry name" value="Rossmann-like_a/b/a_fold"/>
</dbReference>
<dbReference type="NCBIfam" id="TIGR00464">
    <property type="entry name" value="gltX_bact"/>
    <property type="match status" value="1"/>
</dbReference>
<dbReference type="PANTHER" id="PTHR43311">
    <property type="entry name" value="GLUTAMATE--TRNA LIGASE"/>
    <property type="match status" value="1"/>
</dbReference>
<dbReference type="PANTHER" id="PTHR43311:SF2">
    <property type="entry name" value="GLUTAMATE--TRNA LIGASE, MITOCHONDRIAL-RELATED"/>
    <property type="match status" value="1"/>
</dbReference>
<dbReference type="Pfam" id="PF19269">
    <property type="entry name" value="Anticodon_2"/>
    <property type="match status" value="1"/>
</dbReference>
<dbReference type="Pfam" id="PF00749">
    <property type="entry name" value="tRNA-synt_1c"/>
    <property type="match status" value="1"/>
</dbReference>
<dbReference type="PRINTS" id="PR00987">
    <property type="entry name" value="TRNASYNTHGLU"/>
</dbReference>
<dbReference type="SUPFAM" id="SSF48163">
    <property type="entry name" value="An anticodon-binding domain of class I aminoacyl-tRNA synthetases"/>
    <property type="match status" value="1"/>
</dbReference>
<dbReference type="SUPFAM" id="SSF52374">
    <property type="entry name" value="Nucleotidylyl transferase"/>
    <property type="match status" value="1"/>
</dbReference>
<dbReference type="PROSITE" id="PS00178">
    <property type="entry name" value="AA_TRNA_LIGASE_I"/>
    <property type="match status" value="1"/>
</dbReference>
<accession>Q02PU7</accession>
<protein>
    <recommendedName>
        <fullName evidence="1">Glutamate--tRNA ligase</fullName>
        <ecNumber evidence="1">6.1.1.17</ecNumber>
    </recommendedName>
    <alternativeName>
        <fullName evidence="1">Glutamyl-tRNA synthetase</fullName>
        <shortName evidence="1">GluRS</shortName>
    </alternativeName>
</protein>
<evidence type="ECO:0000255" key="1">
    <source>
        <dbReference type="HAMAP-Rule" id="MF_00022"/>
    </source>
</evidence>